<gene>
    <name evidence="1" type="primary">ctaB</name>
    <name type="ordered locus">RPR_06940</name>
</gene>
<organism>
    <name type="scientific">Rickettsia peacockii (strain Rustic)</name>
    <dbReference type="NCBI Taxonomy" id="562019"/>
    <lineage>
        <taxon>Bacteria</taxon>
        <taxon>Pseudomonadati</taxon>
        <taxon>Pseudomonadota</taxon>
        <taxon>Alphaproteobacteria</taxon>
        <taxon>Rickettsiales</taxon>
        <taxon>Rickettsiaceae</taxon>
        <taxon>Rickettsieae</taxon>
        <taxon>Rickettsia</taxon>
        <taxon>spotted fever group</taxon>
    </lineage>
</organism>
<reference key="1">
    <citation type="journal article" date="2009" name="PLoS ONE">
        <title>Genome sequence of the endosymbiont Rickettsia peacockii and comparison with virulent Rickettsia rickettsii: identification of virulence factors.</title>
        <authorList>
            <person name="Felsheim R.F."/>
            <person name="Kurtti T.J."/>
            <person name="Munderloh U.G."/>
        </authorList>
    </citation>
    <scope>NUCLEOTIDE SEQUENCE [LARGE SCALE GENOMIC DNA]</scope>
    <source>
        <strain>Rustic</strain>
    </source>
</reference>
<dbReference type="EC" id="2.5.1.141" evidence="1"/>
<dbReference type="EMBL" id="CP001227">
    <property type="protein sequence ID" value="ACR47854.1"/>
    <property type="molecule type" value="Genomic_DNA"/>
</dbReference>
<dbReference type="RefSeq" id="WP_012737016.1">
    <property type="nucleotide sequence ID" value="NC_012730.1"/>
</dbReference>
<dbReference type="SMR" id="C4K2Q8"/>
<dbReference type="KEGG" id="rpk:RPR_06940"/>
<dbReference type="HOGENOM" id="CLU_029631_0_2_5"/>
<dbReference type="UniPathway" id="UPA00834">
    <property type="reaction ID" value="UER00712"/>
</dbReference>
<dbReference type="Proteomes" id="UP000005015">
    <property type="component" value="Chromosome"/>
</dbReference>
<dbReference type="GO" id="GO:0005886">
    <property type="term" value="C:plasma membrane"/>
    <property type="evidence" value="ECO:0007669"/>
    <property type="project" value="UniProtKB-SubCell"/>
</dbReference>
<dbReference type="GO" id="GO:0008495">
    <property type="term" value="F:protoheme IX farnesyltransferase activity"/>
    <property type="evidence" value="ECO:0007669"/>
    <property type="project" value="UniProtKB-UniRule"/>
</dbReference>
<dbReference type="GO" id="GO:0048034">
    <property type="term" value="P:heme O biosynthetic process"/>
    <property type="evidence" value="ECO:0007669"/>
    <property type="project" value="UniProtKB-UniRule"/>
</dbReference>
<dbReference type="CDD" id="cd13957">
    <property type="entry name" value="PT_UbiA_Cox10"/>
    <property type="match status" value="1"/>
</dbReference>
<dbReference type="Gene3D" id="1.10.357.140">
    <property type="entry name" value="UbiA prenyltransferase"/>
    <property type="match status" value="1"/>
</dbReference>
<dbReference type="HAMAP" id="MF_00154">
    <property type="entry name" value="CyoE_CtaB"/>
    <property type="match status" value="1"/>
</dbReference>
<dbReference type="InterPro" id="IPR006369">
    <property type="entry name" value="Protohaem_IX_farnesylTrfase"/>
</dbReference>
<dbReference type="InterPro" id="IPR000537">
    <property type="entry name" value="UbiA_prenyltransferase"/>
</dbReference>
<dbReference type="InterPro" id="IPR030470">
    <property type="entry name" value="UbiA_prenylTrfase_CS"/>
</dbReference>
<dbReference type="InterPro" id="IPR044878">
    <property type="entry name" value="UbiA_sf"/>
</dbReference>
<dbReference type="NCBIfam" id="TIGR01473">
    <property type="entry name" value="cyoE_ctaB"/>
    <property type="match status" value="1"/>
</dbReference>
<dbReference type="NCBIfam" id="NF003349">
    <property type="entry name" value="PRK04375.1-2"/>
    <property type="match status" value="1"/>
</dbReference>
<dbReference type="PANTHER" id="PTHR43448:SF7">
    <property type="entry name" value="4-HYDROXYBENZOATE SOLANESYLTRANSFERASE"/>
    <property type="match status" value="1"/>
</dbReference>
<dbReference type="PANTHER" id="PTHR43448">
    <property type="entry name" value="PROTOHEME IX FARNESYLTRANSFERASE, MITOCHONDRIAL"/>
    <property type="match status" value="1"/>
</dbReference>
<dbReference type="Pfam" id="PF01040">
    <property type="entry name" value="UbiA"/>
    <property type="match status" value="1"/>
</dbReference>
<dbReference type="PROSITE" id="PS00943">
    <property type="entry name" value="UBIA"/>
    <property type="match status" value="1"/>
</dbReference>
<evidence type="ECO:0000255" key="1">
    <source>
        <dbReference type="HAMAP-Rule" id="MF_00154"/>
    </source>
</evidence>
<proteinExistence type="inferred from homology"/>
<protein>
    <recommendedName>
        <fullName evidence="1">Protoheme IX farnesyltransferase</fullName>
        <ecNumber evidence="1">2.5.1.141</ecNumber>
    </recommendedName>
    <alternativeName>
        <fullName evidence="1">Heme B farnesyltransferase</fullName>
    </alternativeName>
    <alternativeName>
        <fullName evidence="1">Heme O synthase</fullName>
    </alternativeName>
</protein>
<sequence>MSSLVRPINLGKINHSQSTVKDYILLMKPRVMSLVIFTGFVGMWLAPYSVHPFIAGIAVVCIALGAGSAGAINMWYDRDIDSLMKRTQKRPIVRGVIESDEALSFGLITGFFAVFFMALCVNLLASFLLLFTIFYYICIYTIWLKRRSIQNIVIGGVSGALPPVIGYAAVSNTISLESSILFLIIFIWTPPHSWALALFCNDDYKNCKVPMMPAVKGTLYTKKQILIYSILLFIVSLMPFFIGMNNFIYLIISGILGVVFLYYAGSLFYDTPDNKQAKRFFAYSIFYLFFIFLLLYSTNTISTIS</sequence>
<name>COXX_RICPU</name>
<accession>C4K2Q8</accession>
<comment type="function">
    <text evidence="1">Converts heme B (protoheme IX) to heme O by substitution of the vinyl group on carbon 2 of heme B porphyrin ring with a hydroxyethyl farnesyl side group.</text>
</comment>
<comment type="catalytic activity">
    <reaction evidence="1">
        <text>heme b + (2E,6E)-farnesyl diphosphate + H2O = Fe(II)-heme o + diphosphate</text>
        <dbReference type="Rhea" id="RHEA:28070"/>
        <dbReference type="ChEBI" id="CHEBI:15377"/>
        <dbReference type="ChEBI" id="CHEBI:33019"/>
        <dbReference type="ChEBI" id="CHEBI:60344"/>
        <dbReference type="ChEBI" id="CHEBI:60530"/>
        <dbReference type="ChEBI" id="CHEBI:175763"/>
        <dbReference type="EC" id="2.5.1.141"/>
    </reaction>
</comment>
<comment type="pathway">
    <text evidence="1">Porphyrin-containing compound metabolism; heme O biosynthesis; heme O from protoheme: step 1/1.</text>
</comment>
<comment type="subcellular location">
    <subcellularLocation>
        <location evidence="1">Cell inner membrane</location>
        <topology evidence="1">Multi-pass membrane protein</topology>
    </subcellularLocation>
</comment>
<comment type="miscellaneous">
    <text evidence="1">Carbon 2 of the heme B porphyrin ring is defined according to the Fischer nomenclature.</text>
</comment>
<comment type="similarity">
    <text evidence="1">Belongs to the UbiA prenyltransferase family. Protoheme IX farnesyltransferase subfamily.</text>
</comment>
<feature type="chain" id="PRO_1000203458" description="Protoheme IX farnesyltransferase">
    <location>
        <begin position="1"/>
        <end position="305"/>
    </location>
</feature>
<feature type="transmembrane region" description="Helical" evidence="1">
    <location>
        <begin position="31"/>
        <end position="51"/>
    </location>
</feature>
<feature type="transmembrane region" description="Helical" evidence="1">
    <location>
        <begin position="52"/>
        <end position="72"/>
    </location>
</feature>
<feature type="transmembrane region" description="Helical" evidence="1">
    <location>
        <begin position="96"/>
        <end position="118"/>
    </location>
</feature>
<feature type="transmembrane region" description="Helical" evidence="1">
    <location>
        <begin position="122"/>
        <end position="144"/>
    </location>
</feature>
<feature type="transmembrane region" description="Helical" evidence="1">
    <location>
        <begin position="151"/>
        <end position="171"/>
    </location>
</feature>
<feature type="transmembrane region" description="Helical" evidence="1">
    <location>
        <begin position="180"/>
        <end position="200"/>
    </location>
</feature>
<feature type="transmembrane region" description="Helical" evidence="1">
    <location>
        <begin position="225"/>
        <end position="245"/>
    </location>
</feature>
<feature type="transmembrane region" description="Helical" evidence="1">
    <location>
        <begin position="247"/>
        <end position="267"/>
    </location>
</feature>
<feature type="transmembrane region" description="Helical" evidence="1">
    <location>
        <begin position="281"/>
        <end position="301"/>
    </location>
</feature>
<keyword id="KW-0997">Cell inner membrane</keyword>
<keyword id="KW-1003">Cell membrane</keyword>
<keyword id="KW-0350">Heme biosynthesis</keyword>
<keyword id="KW-0472">Membrane</keyword>
<keyword id="KW-0808">Transferase</keyword>
<keyword id="KW-0812">Transmembrane</keyword>
<keyword id="KW-1133">Transmembrane helix</keyword>